<organism>
    <name type="scientific">Mus musculus</name>
    <name type="common">Mouse</name>
    <dbReference type="NCBI Taxonomy" id="10090"/>
    <lineage>
        <taxon>Eukaryota</taxon>
        <taxon>Metazoa</taxon>
        <taxon>Chordata</taxon>
        <taxon>Craniata</taxon>
        <taxon>Vertebrata</taxon>
        <taxon>Euteleostomi</taxon>
        <taxon>Mammalia</taxon>
        <taxon>Eutheria</taxon>
        <taxon>Euarchontoglires</taxon>
        <taxon>Glires</taxon>
        <taxon>Rodentia</taxon>
        <taxon>Myomorpha</taxon>
        <taxon>Muroidea</taxon>
        <taxon>Muridae</taxon>
        <taxon>Murinae</taxon>
        <taxon>Mus</taxon>
        <taxon>Mus</taxon>
    </lineage>
</organism>
<keyword id="KW-1015">Disulfide bond</keyword>
<keyword id="KW-0325">Glycoprotein</keyword>
<keyword id="KW-0333">Golgi apparatus</keyword>
<keyword id="KW-0472">Membrane</keyword>
<keyword id="KW-1185">Reference proteome</keyword>
<keyword id="KW-0735">Signal-anchor</keyword>
<keyword id="KW-0808">Transferase</keyword>
<keyword id="KW-0812">Transmembrane</keyword>
<keyword id="KW-1133">Transmembrane helix</keyword>
<sequence>MVGKLKQNLLLACLVISSVTVFYLGQHAMECHHRIEERSQPARLENPKATVRAGLDIKANKTFTYHKDMPLIFIGGVPRSGTTLMRAMLDAHPDIRCGEETRVIPRILALKQMWSRSSKEKIRLDEAGVTDEVLDSAMQAFLLEVIVKHGEPAPYLCNKDPFALKSLTYLARLFPNAKFLLMVRDGRASVHSMISRKVTIAGFDLNSYRDCLTKWNRAIETMYNQCMEVGYKKCMLVHYEQLVLHPERWMRTLLKFLHIPWNHSVLHHEEMIGKAGGVSLSKVERSTDQVIKPVNVGALSKWVGKIPPDVLQDMAVIAPMLAKLGYDPYANPPNYGKPDPKILENTRRVYKGEFQLPDFLKEKPQTEQVE</sequence>
<name>TPST1_MOUSE</name>
<reference key="1">
    <citation type="journal article" date="1998" name="Proc. Natl. Acad. Sci. U.S.A.">
        <title>Tyrosylprotein sulfotransferase: purification and molecular cloning of an enzyme that catalyzes tyrosine O-sulfation, a common posttranslational modification of eukaryotic proteins.</title>
        <authorList>
            <person name="Ouyang Y.-B."/>
            <person name="Lane W.S."/>
            <person name="Moore K.L."/>
        </authorList>
    </citation>
    <scope>NUCLEOTIDE SEQUENCE [MRNA]</scope>
    <scope>FUNCTION</scope>
    <scope>CATALYTIC ACTIVITY</scope>
    <scope>TISSUE SPECIFICITY</scope>
</reference>
<reference key="2">
    <citation type="journal article" date="2004" name="Genome Res.">
        <title>The status, quality, and expansion of the NIH full-length cDNA project: the Mammalian Gene Collection (MGC).</title>
        <authorList>
            <consortium name="The MGC Project Team"/>
        </authorList>
    </citation>
    <scope>NUCLEOTIDE SEQUENCE [LARGE SCALE MRNA]</scope>
    <source>
        <strain>C57BL/6J</strain>
        <tissue>Mammary gland</tissue>
    </source>
</reference>
<protein>
    <recommendedName>
        <fullName>Protein-tyrosine sulfotransferase 1</fullName>
        <ecNumber evidence="4">2.8.2.20</ecNumber>
    </recommendedName>
    <alternativeName>
        <fullName>Tyrosylprotein sulfotransferase 1</fullName>
        <shortName>TPST-1</shortName>
    </alternativeName>
</protein>
<accession>O70281</accession>
<proteinExistence type="evidence at protein level"/>
<feature type="chain" id="PRO_0000189827" description="Protein-tyrosine sulfotransferase 1">
    <location>
        <begin position="1"/>
        <end position="370"/>
    </location>
</feature>
<feature type="topological domain" description="Cytoplasmic" evidence="3">
    <location>
        <begin position="1"/>
        <end position="8"/>
    </location>
</feature>
<feature type="transmembrane region" description="Helical; Signal-anchor for type II membrane protein" evidence="3">
    <location>
        <begin position="9"/>
        <end position="25"/>
    </location>
</feature>
<feature type="topological domain" description="Lumenal" evidence="3">
    <location>
        <begin position="26"/>
        <end position="370"/>
    </location>
</feature>
<feature type="region of interest" description="Interaction with peptide substrate" evidence="1">
    <location>
        <begin position="102"/>
        <end position="106"/>
    </location>
</feature>
<feature type="active site" description="Proton donor/acceptor" evidence="2">
    <location>
        <position position="100"/>
    </location>
</feature>
<feature type="binding site" evidence="1">
    <location>
        <begin position="79"/>
        <end position="83"/>
    </location>
    <ligand>
        <name>3'-phosphoadenylyl sulfate</name>
        <dbReference type="ChEBI" id="CHEBI:58339"/>
    </ligand>
</feature>
<feature type="binding site" evidence="1">
    <location>
        <position position="184"/>
    </location>
    <ligand>
        <name>3'-phosphoadenylyl sulfate</name>
        <dbReference type="ChEBI" id="CHEBI:58339"/>
    </ligand>
</feature>
<feature type="binding site" evidence="1">
    <location>
        <position position="192"/>
    </location>
    <ligand>
        <name>3'-phosphoadenylyl sulfate</name>
        <dbReference type="ChEBI" id="CHEBI:58339"/>
    </ligand>
</feature>
<feature type="binding site" evidence="1">
    <location>
        <position position="196"/>
    </location>
    <ligand>
        <name>3'-phosphoadenylyl sulfate</name>
        <dbReference type="ChEBI" id="CHEBI:58339"/>
    </ligand>
</feature>
<feature type="binding site" evidence="1">
    <location>
        <position position="239"/>
    </location>
    <ligand>
        <name>3'-phosphoadenylyl sulfate</name>
        <dbReference type="ChEBI" id="CHEBI:58339"/>
    </ligand>
</feature>
<feature type="binding site" evidence="1">
    <location>
        <begin position="286"/>
        <end position="295"/>
    </location>
    <ligand>
        <name>3'-phosphoadenylyl sulfate</name>
        <dbReference type="ChEBI" id="CHEBI:58339"/>
    </ligand>
</feature>
<feature type="binding site" evidence="1">
    <location>
        <position position="301"/>
    </location>
    <ligand>
        <name>3'-phosphoadenylyl sulfate</name>
        <dbReference type="ChEBI" id="CHEBI:58339"/>
    </ligand>
</feature>
<feature type="site" description="Transition state stabilizer" evidence="2">
    <location>
        <position position="159"/>
    </location>
</feature>
<feature type="site" description="Transition state stabilizer" evidence="2">
    <location>
        <position position="286"/>
    </location>
</feature>
<feature type="glycosylation site" description="N-linked (GlcNAc...) asparagine" evidence="3">
    <location>
        <position position="60"/>
    </location>
</feature>
<feature type="glycosylation site" description="N-linked (GlcNAc...) asparagine" evidence="3">
    <location>
        <position position="262"/>
    </location>
</feature>
<feature type="disulfide bond" evidence="2">
    <location>
        <begin position="97"/>
        <end position="157"/>
    </location>
</feature>
<feature type="disulfide bond" evidence="2">
    <location>
        <begin position="226"/>
        <end position="234"/>
    </location>
</feature>
<comment type="function">
    <text evidence="4">Catalyzes the O-sulfation of tyrosine residues within acidic motifs of polypeptides, using 3'-phosphoadenylyl sulfate (PAPS) as cosubstrate.</text>
</comment>
<comment type="catalytic activity">
    <reaction evidence="4">
        <text>L-tyrosyl-[protein] + 3'-phosphoadenylyl sulfate = O-sulfo-L-tyrosine-[protein] + adenosine 3',5'-bisphosphate + H(+)</text>
        <dbReference type="Rhea" id="RHEA:16801"/>
        <dbReference type="Rhea" id="RHEA-COMP:10136"/>
        <dbReference type="Rhea" id="RHEA-COMP:11688"/>
        <dbReference type="ChEBI" id="CHEBI:15378"/>
        <dbReference type="ChEBI" id="CHEBI:46858"/>
        <dbReference type="ChEBI" id="CHEBI:58339"/>
        <dbReference type="ChEBI" id="CHEBI:58343"/>
        <dbReference type="ChEBI" id="CHEBI:65286"/>
        <dbReference type="EC" id="2.8.2.20"/>
    </reaction>
</comment>
<comment type="subunit">
    <text evidence="1">Homodimer. Can also form heterodimers with TPST2.</text>
</comment>
<comment type="subcellular location">
    <subcellularLocation>
        <location evidence="1">Golgi apparatus membrane</location>
        <topology evidence="1">Single-pass type II membrane protein</topology>
    </subcellularLocation>
</comment>
<comment type="tissue specificity">
    <text evidence="4">Ubiquitous. Detected in heart, brain, lung, liver, spleen, kidney, skeletal muscle and testis.</text>
</comment>
<comment type="PTM">
    <text evidence="1">N-glycosylated.</text>
</comment>
<comment type="similarity">
    <text evidence="5">Belongs to the protein sulfotransferase family.</text>
</comment>
<dbReference type="EC" id="2.8.2.20" evidence="4"/>
<dbReference type="EMBL" id="AF038008">
    <property type="protein sequence ID" value="AAC13551.1"/>
    <property type="molecule type" value="mRNA"/>
</dbReference>
<dbReference type="EMBL" id="BC012666">
    <property type="protein sequence ID" value="AAH12666.1"/>
    <property type="molecule type" value="mRNA"/>
</dbReference>
<dbReference type="CCDS" id="CCDS39293.1"/>
<dbReference type="RefSeq" id="NP_001123948.1">
    <property type="nucleotide sequence ID" value="NM_001130476.2"/>
</dbReference>
<dbReference type="RefSeq" id="NP_038865.1">
    <property type="nucleotide sequence ID" value="NM_013837.2"/>
</dbReference>
<dbReference type="RefSeq" id="XP_036020889.1">
    <property type="nucleotide sequence ID" value="XM_036164996.1"/>
</dbReference>
<dbReference type="SMR" id="O70281"/>
<dbReference type="FunCoup" id="O70281">
    <property type="interactions" value="686"/>
</dbReference>
<dbReference type="STRING" id="10090.ENSMUSP00000035614"/>
<dbReference type="GlyCosmos" id="O70281">
    <property type="glycosylation" value="2 sites, No reported glycans"/>
</dbReference>
<dbReference type="GlyGen" id="O70281">
    <property type="glycosylation" value="2 sites"/>
</dbReference>
<dbReference type="iPTMnet" id="O70281"/>
<dbReference type="PhosphoSitePlus" id="O70281"/>
<dbReference type="SwissPalm" id="O70281"/>
<dbReference type="PaxDb" id="10090-ENSMUSP00000035614"/>
<dbReference type="PeptideAtlas" id="O70281"/>
<dbReference type="ProteomicsDB" id="259291"/>
<dbReference type="Pumba" id="O70281"/>
<dbReference type="Antibodypedia" id="35330">
    <property type="antibodies" value="156 antibodies from 20 providers"/>
</dbReference>
<dbReference type="DNASU" id="22021"/>
<dbReference type="Ensembl" id="ENSMUST00000040721.9">
    <property type="protein sequence ID" value="ENSMUSP00000035614.9"/>
    <property type="gene ID" value="ENSMUSG00000034118.16"/>
</dbReference>
<dbReference type="Ensembl" id="ENSMUST00000118993.8">
    <property type="protein sequence ID" value="ENSMUSP00000112571.2"/>
    <property type="gene ID" value="ENSMUSG00000034118.16"/>
</dbReference>
<dbReference type="GeneID" id="22021"/>
<dbReference type="KEGG" id="mmu:22021"/>
<dbReference type="UCSC" id="uc008zuc.3">
    <property type="organism name" value="mouse"/>
</dbReference>
<dbReference type="AGR" id="MGI:1298231"/>
<dbReference type="CTD" id="8460"/>
<dbReference type="MGI" id="MGI:1298231">
    <property type="gene designation" value="Tpst1"/>
</dbReference>
<dbReference type="VEuPathDB" id="HostDB:ENSMUSG00000034118"/>
<dbReference type="eggNOG" id="KOG3988">
    <property type="taxonomic scope" value="Eukaryota"/>
</dbReference>
<dbReference type="GeneTree" id="ENSGT00390000006030"/>
<dbReference type="HOGENOM" id="CLU_046916_0_1_1"/>
<dbReference type="InParanoid" id="O70281"/>
<dbReference type="OMA" id="SQWKKSE"/>
<dbReference type="OrthoDB" id="545675at2759"/>
<dbReference type="PhylomeDB" id="O70281"/>
<dbReference type="TreeFam" id="TF312910"/>
<dbReference type="BRENDA" id="2.8.2.20">
    <property type="organism ID" value="3474"/>
</dbReference>
<dbReference type="Reactome" id="R-MMU-156584">
    <property type="pathway name" value="Cytosolic sulfonation of small molecules"/>
</dbReference>
<dbReference type="Reactome" id="R-MMU-163841">
    <property type="pathway name" value="Gamma carboxylation, hypusinylation, hydroxylation, and arylsulfatase activation"/>
</dbReference>
<dbReference type="BioGRID-ORCS" id="22021">
    <property type="hits" value="3 hits in 75 CRISPR screens"/>
</dbReference>
<dbReference type="ChiTaRS" id="Tpst1">
    <property type="organism name" value="mouse"/>
</dbReference>
<dbReference type="PRO" id="PR:O70281"/>
<dbReference type="Proteomes" id="UP000000589">
    <property type="component" value="Chromosome 5"/>
</dbReference>
<dbReference type="RNAct" id="O70281">
    <property type="molecule type" value="protein"/>
</dbReference>
<dbReference type="Bgee" id="ENSMUSG00000034118">
    <property type="expression patterns" value="Expressed in vault of skull and 253 other cell types or tissues"/>
</dbReference>
<dbReference type="ExpressionAtlas" id="O70281">
    <property type="expression patterns" value="baseline and differential"/>
</dbReference>
<dbReference type="GO" id="GO:0005796">
    <property type="term" value="C:Golgi lumen"/>
    <property type="evidence" value="ECO:0000314"/>
    <property type="project" value="MGI"/>
</dbReference>
<dbReference type="GO" id="GO:0000139">
    <property type="term" value="C:Golgi membrane"/>
    <property type="evidence" value="ECO:0000250"/>
    <property type="project" value="UniProtKB"/>
</dbReference>
<dbReference type="GO" id="GO:0005802">
    <property type="term" value="C:trans-Golgi network"/>
    <property type="evidence" value="ECO:0000314"/>
    <property type="project" value="MGI"/>
</dbReference>
<dbReference type="GO" id="GO:0042803">
    <property type="term" value="F:protein homodimerization activity"/>
    <property type="evidence" value="ECO:0007669"/>
    <property type="project" value="Ensembl"/>
</dbReference>
<dbReference type="GO" id="GO:0008476">
    <property type="term" value="F:protein-tyrosine sulfotransferase activity"/>
    <property type="evidence" value="ECO:0000314"/>
    <property type="project" value="UniProtKB"/>
</dbReference>
<dbReference type="GO" id="GO:0043687">
    <property type="term" value="P:post-translational protein modification"/>
    <property type="evidence" value="ECO:0000314"/>
    <property type="project" value="UniProtKB"/>
</dbReference>
<dbReference type="FunFam" id="3.40.50.300:FF:000290">
    <property type="entry name" value="Protein-tyrosine sulfotransferase"/>
    <property type="match status" value="1"/>
</dbReference>
<dbReference type="Gene3D" id="3.40.50.300">
    <property type="entry name" value="P-loop containing nucleotide triphosphate hydrolases"/>
    <property type="match status" value="1"/>
</dbReference>
<dbReference type="InterPro" id="IPR027417">
    <property type="entry name" value="P-loop_NTPase"/>
</dbReference>
<dbReference type="InterPro" id="IPR026634">
    <property type="entry name" value="TPST-like"/>
</dbReference>
<dbReference type="PANTHER" id="PTHR12788:SF4">
    <property type="entry name" value="PROTEIN-TYROSINE SULFOTRANSFERASE 1"/>
    <property type="match status" value="1"/>
</dbReference>
<dbReference type="PANTHER" id="PTHR12788">
    <property type="entry name" value="PROTEIN-TYROSINE SULFOTRANSFERASE 2"/>
    <property type="match status" value="1"/>
</dbReference>
<dbReference type="Pfam" id="PF13469">
    <property type="entry name" value="Sulfotransfer_3"/>
    <property type="match status" value="1"/>
</dbReference>
<dbReference type="SUPFAM" id="SSF52540">
    <property type="entry name" value="P-loop containing nucleoside triphosphate hydrolases"/>
    <property type="match status" value="1"/>
</dbReference>
<gene>
    <name type="primary">Tpst1</name>
</gene>
<evidence type="ECO:0000250" key="1">
    <source>
        <dbReference type="UniProtKB" id="O60507"/>
    </source>
</evidence>
<evidence type="ECO:0000250" key="2">
    <source>
        <dbReference type="UniProtKB" id="O60704"/>
    </source>
</evidence>
<evidence type="ECO:0000255" key="3"/>
<evidence type="ECO:0000269" key="4">
    <source>
    </source>
</evidence>
<evidence type="ECO:0000305" key="5"/>